<feature type="chain" id="PRO_1000009501" description="UPF0114 protein YqhA">
    <location>
        <begin position="1"/>
        <end position="164"/>
    </location>
</feature>
<feature type="transmembrane region" description="Helical" evidence="1">
    <location>
        <begin position="15"/>
        <end position="35"/>
    </location>
</feature>
<feature type="transmembrane region" description="Helical" evidence="1">
    <location>
        <begin position="53"/>
        <end position="73"/>
    </location>
</feature>
<feature type="transmembrane region" description="Helical" evidence="1">
    <location>
        <begin position="136"/>
        <end position="156"/>
    </location>
</feature>
<evidence type="ECO:0000255" key="1">
    <source>
        <dbReference type="HAMAP-Rule" id="MF_00143"/>
    </source>
</evidence>
<accession>Q3YXN2</accession>
<protein>
    <recommendedName>
        <fullName evidence="1">UPF0114 protein YqhA</fullName>
    </recommendedName>
</protein>
<reference key="1">
    <citation type="journal article" date="2005" name="Nucleic Acids Res.">
        <title>Genome dynamics and diversity of Shigella species, the etiologic agents of bacillary dysentery.</title>
        <authorList>
            <person name="Yang F."/>
            <person name="Yang J."/>
            <person name="Zhang X."/>
            <person name="Chen L."/>
            <person name="Jiang Y."/>
            <person name="Yan Y."/>
            <person name="Tang X."/>
            <person name="Wang J."/>
            <person name="Xiong Z."/>
            <person name="Dong J."/>
            <person name="Xue Y."/>
            <person name="Zhu Y."/>
            <person name="Xu X."/>
            <person name="Sun L."/>
            <person name="Chen S."/>
            <person name="Nie H."/>
            <person name="Peng J."/>
            <person name="Xu J."/>
            <person name="Wang Y."/>
            <person name="Yuan Z."/>
            <person name="Wen Y."/>
            <person name="Yao Z."/>
            <person name="Shen Y."/>
            <person name="Qiang B."/>
            <person name="Hou Y."/>
            <person name="Yu J."/>
            <person name="Jin Q."/>
        </authorList>
    </citation>
    <scope>NUCLEOTIDE SEQUENCE [LARGE SCALE GENOMIC DNA]</scope>
    <source>
        <strain>Ss046</strain>
    </source>
</reference>
<sequence>MERFLENAMYASRWLLAPVYFGLSLALVALALKFFQEIIHVLPNIFSMAESDLILVLLSLVDMTLVGGLLVMVMFSGYENFVSQLDISENKEKLNWLGKMDATSLKNKVAASIVAISSIHLLRVFMDAKNVPDNKLMWYVIIHLTFVLSAFVMGYLDRLTRHNH</sequence>
<name>YQHA_SHISS</name>
<organism>
    <name type="scientific">Shigella sonnei (strain Ss046)</name>
    <dbReference type="NCBI Taxonomy" id="300269"/>
    <lineage>
        <taxon>Bacteria</taxon>
        <taxon>Pseudomonadati</taxon>
        <taxon>Pseudomonadota</taxon>
        <taxon>Gammaproteobacteria</taxon>
        <taxon>Enterobacterales</taxon>
        <taxon>Enterobacteriaceae</taxon>
        <taxon>Shigella</taxon>
    </lineage>
</organism>
<proteinExistence type="inferred from homology"/>
<keyword id="KW-1003">Cell membrane</keyword>
<keyword id="KW-0472">Membrane</keyword>
<keyword id="KW-1185">Reference proteome</keyword>
<keyword id="KW-0812">Transmembrane</keyword>
<keyword id="KW-1133">Transmembrane helix</keyword>
<gene>
    <name evidence="1" type="primary">yqhA</name>
    <name type="ordered locus">SSON_3146</name>
</gene>
<dbReference type="EMBL" id="CP000038">
    <property type="protein sequence ID" value="AAZ89730.1"/>
    <property type="molecule type" value="Genomic_DNA"/>
</dbReference>
<dbReference type="RefSeq" id="WP_000439331.1">
    <property type="nucleotide sequence ID" value="NC_007384.1"/>
</dbReference>
<dbReference type="KEGG" id="ssn:SSON_3146"/>
<dbReference type="HOGENOM" id="CLU_097887_1_1_6"/>
<dbReference type="Proteomes" id="UP000002529">
    <property type="component" value="Chromosome"/>
</dbReference>
<dbReference type="GO" id="GO:0005886">
    <property type="term" value="C:plasma membrane"/>
    <property type="evidence" value="ECO:0007669"/>
    <property type="project" value="UniProtKB-SubCell"/>
</dbReference>
<dbReference type="HAMAP" id="MF_00143">
    <property type="entry name" value="UPF0114"/>
    <property type="match status" value="1"/>
</dbReference>
<dbReference type="InterPro" id="IPR005134">
    <property type="entry name" value="UPF0114"/>
</dbReference>
<dbReference type="InterPro" id="IPR020761">
    <property type="entry name" value="UPF0114_bac"/>
</dbReference>
<dbReference type="NCBIfam" id="TIGR00645">
    <property type="entry name" value="HI0507"/>
    <property type="match status" value="1"/>
</dbReference>
<dbReference type="PANTHER" id="PTHR38596">
    <property type="entry name" value="UPF0114 PROTEIN YQHA"/>
    <property type="match status" value="1"/>
</dbReference>
<dbReference type="PANTHER" id="PTHR38596:SF1">
    <property type="entry name" value="UPF0114 PROTEIN YQHA"/>
    <property type="match status" value="1"/>
</dbReference>
<dbReference type="Pfam" id="PF03350">
    <property type="entry name" value="UPF0114"/>
    <property type="match status" value="1"/>
</dbReference>
<comment type="subcellular location">
    <subcellularLocation>
        <location evidence="1">Cell membrane</location>
        <topology evidence="1">Multi-pass membrane protein</topology>
    </subcellularLocation>
</comment>
<comment type="similarity">
    <text evidence="1">Belongs to the UPF0114 family.</text>
</comment>